<sequence length="227" mass="26022">MAYPLQLGFQDATSPVMEELLHFHDHTLMIIFLISSLVLYIIMLMLTTKLIHTNMMNVQEMEMIWTILPAIILILIALPSLHTLYMMDEINNPLLTIKTMGHQWFWSYEYTDYEDLAFDSYMITTDSLKFGELRLLEVDNRMVLPTDLPVRVLVSSEDVLHSWAVPSLGLKTDAIPGRLNQVTLTSMRPGLFYGQCSEICGANHSFMPIVLELVPLKYFESWSASLA</sequence>
<feature type="chain" id="PRO_0000232842" description="Cytochrome c oxidase subunit 2">
    <location>
        <begin position="1"/>
        <end position="227"/>
    </location>
</feature>
<feature type="topological domain" description="Mitochondrial intermembrane" evidence="4">
    <location>
        <begin position="1"/>
        <end position="14"/>
    </location>
</feature>
<feature type="transmembrane region" description="Helical; Name=I" evidence="4">
    <location>
        <begin position="15"/>
        <end position="45"/>
    </location>
</feature>
<feature type="topological domain" description="Mitochondrial matrix" evidence="4">
    <location>
        <begin position="46"/>
        <end position="59"/>
    </location>
</feature>
<feature type="transmembrane region" description="Helical; Name=II" evidence="4">
    <location>
        <begin position="60"/>
        <end position="87"/>
    </location>
</feature>
<feature type="topological domain" description="Mitochondrial intermembrane" evidence="4">
    <location>
        <begin position="88"/>
        <end position="227"/>
    </location>
</feature>
<feature type="binding site" evidence="4">
    <location>
        <position position="161"/>
    </location>
    <ligand>
        <name>Cu cation</name>
        <dbReference type="ChEBI" id="CHEBI:23378"/>
        <label>A1</label>
    </ligand>
</feature>
<feature type="binding site" evidence="4">
    <location>
        <position position="196"/>
    </location>
    <ligand>
        <name>Cu cation</name>
        <dbReference type="ChEBI" id="CHEBI:23378"/>
        <label>A1</label>
    </ligand>
</feature>
<feature type="binding site" evidence="4">
    <location>
        <position position="196"/>
    </location>
    <ligand>
        <name>Cu cation</name>
        <dbReference type="ChEBI" id="CHEBI:23378"/>
        <label>A2</label>
    </ligand>
</feature>
<feature type="binding site" evidence="4">
    <location>
        <position position="198"/>
    </location>
    <ligand>
        <name>Cu cation</name>
        <dbReference type="ChEBI" id="CHEBI:23378"/>
        <label>A2</label>
    </ligand>
</feature>
<feature type="binding site" evidence="4">
    <location>
        <position position="198"/>
    </location>
    <ligand>
        <name>Mg(2+)</name>
        <dbReference type="ChEBI" id="CHEBI:18420"/>
        <note>ligand shared with MT-CO1</note>
    </ligand>
</feature>
<feature type="binding site" evidence="4">
    <location>
        <position position="200"/>
    </location>
    <ligand>
        <name>Cu cation</name>
        <dbReference type="ChEBI" id="CHEBI:23378"/>
        <label>A1</label>
    </ligand>
</feature>
<feature type="binding site" evidence="4">
    <location>
        <position position="200"/>
    </location>
    <ligand>
        <name>Cu cation</name>
        <dbReference type="ChEBI" id="CHEBI:23378"/>
        <label>A2</label>
    </ligand>
</feature>
<feature type="binding site" evidence="4">
    <location>
        <position position="204"/>
    </location>
    <ligand>
        <name>Cu cation</name>
        <dbReference type="ChEBI" id="CHEBI:23378"/>
        <label>A2</label>
    </ligand>
</feature>
<feature type="binding site" evidence="4">
    <location>
        <position position="207"/>
    </location>
    <ligand>
        <name>Cu cation</name>
        <dbReference type="ChEBI" id="CHEBI:23378"/>
        <label>A1</label>
    </ligand>
</feature>
<feature type="modified residue" description="Phosphotyrosine" evidence="2">
    <location>
        <position position="218"/>
    </location>
</feature>
<name>COX2_ELEMA</name>
<geneLocation type="mitochondrion"/>
<reference key="1">
    <citation type="journal article" date="2006" name="PLoS Biol.">
        <title>Complete mitochondrial genome and phylogeny of Pleistocene mammoth Mammuthus primigenius.</title>
        <authorList>
            <person name="Rogaev E.I."/>
            <person name="Moliaka Y.K."/>
            <person name="Malyarchuk B.A."/>
            <person name="Kondrashov F.A."/>
            <person name="Derenko M.V."/>
            <person name="Chumakov I."/>
            <person name="Grigorenko A.P."/>
        </authorList>
    </citation>
    <scope>NUCLEOTIDE SEQUENCE [GENOMIC DNA]</scope>
    <source>
        <tissue>Blood</tissue>
    </source>
</reference>
<protein>
    <recommendedName>
        <fullName>Cytochrome c oxidase subunit 2</fullName>
        <ecNumber>7.1.1.9</ecNumber>
    </recommendedName>
    <alternativeName>
        <fullName>Cytochrome c oxidase polypeptide II</fullName>
    </alternativeName>
</protein>
<accession>Q2I3H1</accession>
<keyword id="KW-0186">Copper</keyword>
<keyword id="KW-0249">Electron transport</keyword>
<keyword id="KW-0460">Magnesium</keyword>
<keyword id="KW-0472">Membrane</keyword>
<keyword id="KW-0479">Metal-binding</keyword>
<keyword id="KW-0496">Mitochondrion</keyword>
<keyword id="KW-0999">Mitochondrion inner membrane</keyword>
<keyword id="KW-0597">Phosphoprotein</keyword>
<keyword id="KW-0679">Respiratory chain</keyword>
<keyword id="KW-1278">Translocase</keyword>
<keyword id="KW-0812">Transmembrane</keyword>
<keyword id="KW-1133">Transmembrane helix</keyword>
<keyword id="KW-0813">Transport</keyword>
<organism>
    <name type="scientific">Elephas maximus</name>
    <name type="common">Indian elephant</name>
    <dbReference type="NCBI Taxonomy" id="9783"/>
    <lineage>
        <taxon>Eukaryota</taxon>
        <taxon>Metazoa</taxon>
        <taxon>Chordata</taxon>
        <taxon>Craniata</taxon>
        <taxon>Vertebrata</taxon>
        <taxon>Euteleostomi</taxon>
        <taxon>Mammalia</taxon>
        <taxon>Eutheria</taxon>
        <taxon>Afrotheria</taxon>
        <taxon>Proboscidea</taxon>
        <taxon>Elephantidae</taxon>
        <taxon>Elephas</taxon>
    </lineage>
</organism>
<comment type="function">
    <text evidence="3">Component of the cytochrome c oxidase, the last enzyme in the mitochondrial electron transport chain which drives oxidative phosphorylation. The respiratory chain contains 3 multisubunit complexes succinate dehydrogenase (complex II, CII), ubiquinol-cytochrome c oxidoreductase (cytochrome b-c1 complex, complex III, CIII) and cytochrome c oxidase (complex IV, CIV), that cooperate to transfer electrons derived from NADH and succinate to molecular oxygen, creating an electrochemical gradient over the inner membrane that drives transmembrane transport and the ATP synthase. Cytochrome c oxidase is the component of the respiratory chain that catalyzes the reduction of oxygen to water. Electrons originating from reduced cytochrome c in the intermembrane space (IMS) are transferred via the dinuclear copper A center (CU(A)) of subunit 2 and heme A of subunit 1 to the active site in subunit 1, a binuclear center (BNC) formed by heme A3 and copper B (CU(B)). The BNC reduces molecular oxygen to 2 water molecules using 4 electrons from cytochrome c in the IMS and 4 protons from the mitochondrial matrix.</text>
</comment>
<comment type="catalytic activity">
    <reaction evidence="3">
        <text>4 Fe(II)-[cytochrome c] + O2 + 8 H(+)(in) = 4 Fe(III)-[cytochrome c] + 2 H2O + 4 H(+)(out)</text>
        <dbReference type="Rhea" id="RHEA:11436"/>
        <dbReference type="Rhea" id="RHEA-COMP:10350"/>
        <dbReference type="Rhea" id="RHEA-COMP:14399"/>
        <dbReference type="ChEBI" id="CHEBI:15377"/>
        <dbReference type="ChEBI" id="CHEBI:15378"/>
        <dbReference type="ChEBI" id="CHEBI:15379"/>
        <dbReference type="ChEBI" id="CHEBI:29033"/>
        <dbReference type="ChEBI" id="CHEBI:29034"/>
        <dbReference type="EC" id="7.1.1.9"/>
    </reaction>
    <physiologicalReaction direction="left-to-right" evidence="3">
        <dbReference type="Rhea" id="RHEA:11437"/>
    </physiologicalReaction>
</comment>
<comment type="cofactor">
    <cofactor evidence="4">
        <name>Cu cation</name>
        <dbReference type="ChEBI" id="CHEBI:23378"/>
    </cofactor>
    <text evidence="4">Binds a dinuclear copper A center per subunit.</text>
</comment>
<comment type="subunit">
    <text evidence="1 4">Component of the cytochrome c oxidase (complex IV, CIV), a multisubunit enzyme composed of 14 subunits. The complex is composed of a catalytic core of 3 subunits MT-CO1, MT-CO2 and MT-CO3, encoded in the mitochondrial DNA, and 11 supernumerary subunits COX4I, COX5A, COX5B, COX6A, COX6B, COX6C, COX7A, COX7B, COX7C, COX8 and NDUFA4, which are encoded in the nuclear genome. The complex exists as a monomer or a dimer and forms supercomplexes (SCs) in the inner mitochondrial membrane with NADH-ubiquinone oxidoreductase (complex I, CI) and ubiquinol-cytochrome c oxidoreductase (cytochrome b-c1 complex, complex III, CIII), resulting in different assemblies (supercomplex SCI(1)III(2)IV(1) and megacomplex MCI(2)III(2)IV(2)) (By similarity). Found in a complex with TMEM177, COA6, COX18, COX20, SCO1 and SCO2. Interacts with TMEM177 in a COX20-dependent manner. Interacts with COX20. Interacts with COX16 (By similarity).</text>
</comment>
<comment type="subcellular location">
    <subcellularLocation>
        <location evidence="4">Mitochondrion inner membrane</location>
        <topology evidence="4">Multi-pass membrane protein</topology>
    </subcellularLocation>
</comment>
<comment type="similarity">
    <text evidence="5">Belongs to the cytochrome c oxidase subunit 2 family.</text>
</comment>
<evidence type="ECO:0000250" key="1">
    <source>
        <dbReference type="UniProtKB" id="P00403"/>
    </source>
</evidence>
<evidence type="ECO:0000250" key="2">
    <source>
        <dbReference type="UniProtKB" id="P00406"/>
    </source>
</evidence>
<evidence type="ECO:0000250" key="3">
    <source>
        <dbReference type="UniProtKB" id="P00410"/>
    </source>
</evidence>
<evidence type="ECO:0000250" key="4">
    <source>
        <dbReference type="UniProtKB" id="P68530"/>
    </source>
</evidence>
<evidence type="ECO:0000305" key="5"/>
<dbReference type="EC" id="7.1.1.9"/>
<dbReference type="EMBL" id="DQ316068">
    <property type="protein sequence ID" value="ABC17894.1"/>
    <property type="molecule type" value="Genomic_DNA"/>
</dbReference>
<dbReference type="SMR" id="Q2I3H1"/>
<dbReference type="CTD" id="4513"/>
<dbReference type="GO" id="GO:0005743">
    <property type="term" value="C:mitochondrial inner membrane"/>
    <property type="evidence" value="ECO:0007669"/>
    <property type="project" value="UniProtKB-SubCell"/>
</dbReference>
<dbReference type="GO" id="GO:0045277">
    <property type="term" value="C:respiratory chain complex IV"/>
    <property type="evidence" value="ECO:0000250"/>
    <property type="project" value="UniProtKB"/>
</dbReference>
<dbReference type="GO" id="GO:0005507">
    <property type="term" value="F:copper ion binding"/>
    <property type="evidence" value="ECO:0007669"/>
    <property type="project" value="InterPro"/>
</dbReference>
<dbReference type="GO" id="GO:0004129">
    <property type="term" value="F:cytochrome-c oxidase activity"/>
    <property type="evidence" value="ECO:0007669"/>
    <property type="project" value="UniProtKB-EC"/>
</dbReference>
<dbReference type="GO" id="GO:0042773">
    <property type="term" value="P:ATP synthesis coupled electron transport"/>
    <property type="evidence" value="ECO:0007669"/>
    <property type="project" value="TreeGrafter"/>
</dbReference>
<dbReference type="CDD" id="cd13912">
    <property type="entry name" value="CcO_II_C"/>
    <property type="match status" value="1"/>
</dbReference>
<dbReference type="FunFam" id="1.10.287.90:FF:000001">
    <property type="entry name" value="Cytochrome c oxidase subunit 2"/>
    <property type="match status" value="1"/>
</dbReference>
<dbReference type="FunFam" id="2.60.40.420:FF:000001">
    <property type="entry name" value="Cytochrome c oxidase subunit 2"/>
    <property type="match status" value="1"/>
</dbReference>
<dbReference type="Gene3D" id="1.10.287.90">
    <property type="match status" value="1"/>
</dbReference>
<dbReference type="Gene3D" id="2.60.40.420">
    <property type="entry name" value="Cupredoxins - blue copper proteins"/>
    <property type="match status" value="1"/>
</dbReference>
<dbReference type="InterPro" id="IPR045187">
    <property type="entry name" value="CcO_II"/>
</dbReference>
<dbReference type="InterPro" id="IPR002429">
    <property type="entry name" value="CcO_II-like_C"/>
</dbReference>
<dbReference type="InterPro" id="IPR034210">
    <property type="entry name" value="CcO_II_C"/>
</dbReference>
<dbReference type="InterPro" id="IPR001505">
    <property type="entry name" value="Copper_CuA"/>
</dbReference>
<dbReference type="InterPro" id="IPR008972">
    <property type="entry name" value="Cupredoxin"/>
</dbReference>
<dbReference type="InterPro" id="IPR014222">
    <property type="entry name" value="Cyt_c_oxidase_su2"/>
</dbReference>
<dbReference type="InterPro" id="IPR011759">
    <property type="entry name" value="Cyt_c_oxidase_su2_TM_dom"/>
</dbReference>
<dbReference type="InterPro" id="IPR036257">
    <property type="entry name" value="Cyt_c_oxidase_su2_TM_sf"/>
</dbReference>
<dbReference type="NCBIfam" id="TIGR02866">
    <property type="entry name" value="CoxB"/>
    <property type="match status" value="1"/>
</dbReference>
<dbReference type="PANTHER" id="PTHR22888:SF9">
    <property type="entry name" value="CYTOCHROME C OXIDASE SUBUNIT 2"/>
    <property type="match status" value="1"/>
</dbReference>
<dbReference type="PANTHER" id="PTHR22888">
    <property type="entry name" value="CYTOCHROME C OXIDASE, SUBUNIT II"/>
    <property type="match status" value="1"/>
</dbReference>
<dbReference type="Pfam" id="PF00116">
    <property type="entry name" value="COX2"/>
    <property type="match status" value="1"/>
</dbReference>
<dbReference type="Pfam" id="PF02790">
    <property type="entry name" value="COX2_TM"/>
    <property type="match status" value="1"/>
</dbReference>
<dbReference type="PRINTS" id="PR01166">
    <property type="entry name" value="CYCOXIDASEII"/>
</dbReference>
<dbReference type="SUPFAM" id="SSF49503">
    <property type="entry name" value="Cupredoxins"/>
    <property type="match status" value="1"/>
</dbReference>
<dbReference type="SUPFAM" id="SSF81464">
    <property type="entry name" value="Cytochrome c oxidase subunit II-like, transmembrane region"/>
    <property type="match status" value="1"/>
</dbReference>
<dbReference type="PROSITE" id="PS00078">
    <property type="entry name" value="COX2"/>
    <property type="match status" value="1"/>
</dbReference>
<dbReference type="PROSITE" id="PS50857">
    <property type="entry name" value="COX2_CUA"/>
    <property type="match status" value="1"/>
</dbReference>
<dbReference type="PROSITE" id="PS50999">
    <property type="entry name" value="COX2_TM"/>
    <property type="match status" value="1"/>
</dbReference>
<gene>
    <name type="primary">MT-CO2</name>
    <name type="synonym">COII</name>
    <name type="synonym">COXII</name>
    <name type="synonym">MTCO2</name>
</gene>
<proteinExistence type="inferred from homology"/>